<dbReference type="EC" id="2.7.7.23" evidence="1"/>
<dbReference type="EC" id="2.3.1.157" evidence="1"/>
<dbReference type="EMBL" id="CP000124">
    <property type="protein sequence ID" value="ABA49097.1"/>
    <property type="status" value="ALT_INIT"/>
    <property type="molecule type" value="Genomic_DNA"/>
</dbReference>
<dbReference type="RefSeq" id="WP_004190034.1">
    <property type="nucleotide sequence ID" value="NC_007434.1"/>
</dbReference>
<dbReference type="SMR" id="Q3JWX1"/>
<dbReference type="EnsemblBacteria" id="ABA49097">
    <property type="protein sequence ID" value="ABA49097"/>
    <property type="gene ID" value="BURPS1710b_0518"/>
</dbReference>
<dbReference type="GeneID" id="92981044"/>
<dbReference type="KEGG" id="bpm:BURPS1710b_0518"/>
<dbReference type="HOGENOM" id="CLU_029499_15_2_4"/>
<dbReference type="UniPathway" id="UPA00113">
    <property type="reaction ID" value="UER00532"/>
</dbReference>
<dbReference type="UniPathway" id="UPA00113">
    <property type="reaction ID" value="UER00533"/>
</dbReference>
<dbReference type="UniPathway" id="UPA00973"/>
<dbReference type="Proteomes" id="UP000002700">
    <property type="component" value="Chromosome I"/>
</dbReference>
<dbReference type="GO" id="GO:0005737">
    <property type="term" value="C:cytoplasm"/>
    <property type="evidence" value="ECO:0007669"/>
    <property type="project" value="UniProtKB-SubCell"/>
</dbReference>
<dbReference type="GO" id="GO:0016020">
    <property type="term" value="C:membrane"/>
    <property type="evidence" value="ECO:0007669"/>
    <property type="project" value="GOC"/>
</dbReference>
<dbReference type="GO" id="GO:0019134">
    <property type="term" value="F:glucosamine-1-phosphate N-acetyltransferase activity"/>
    <property type="evidence" value="ECO:0007669"/>
    <property type="project" value="UniProtKB-UniRule"/>
</dbReference>
<dbReference type="GO" id="GO:0000287">
    <property type="term" value="F:magnesium ion binding"/>
    <property type="evidence" value="ECO:0007669"/>
    <property type="project" value="UniProtKB-UniRule"/>
</dbReference>
<dbReference type="GO" id="GO:0003977">
    <property type="term" value="F:UDP-N-acetylglucosamine diphosphorylase activity"/>
    <property type="evidence" value="ECO:0007669"/>
    <property type="project" value="UniProtKB-UniRule"/>
</dbReference>
<dbReference type="GO" id="GO:0000902">
    <property type="term" value="P:cell morphogenesis"/>
    <property type="evidence" value="ECO:0007669"/>
    <property type="project" value="UniProtKB-UniRule"/>
</dbReference>
<dbReference type="GO" id="GO:0071555">
    <property type="term" value="P:cell wall organization"/>
    <property type="evidence" value="ECO:0007669"/>
    <property type="project" value="UniProtKB-KW"/>
</dbReference>
<dbReference type="GO" id="GO:0009245">
    <property type="term" value="P:lipid A biosynthetic process"/>
    <property type="evidence" value="ECO:0007669"/>
    <property type="project" value="UniProtKB-UniRule"/>
</dbReference>
<dbReference type="GO" id="GO:0009252">
    <property type="term" value="P:peptidoglycan biosynthetic process"/>
    <property type="evidence" value="ECO:0007669"/>
    <property type="project" value="UniProtKB-UniRule"/>
</dbReference>
<dbReference type="GO" id="GO:0008360">
    <property type="term" value="P:regulation of cell shape"/>
    <property type="evidence" value="ECO:0007669"/>
    <property type="project" value="UniProtKB-KW"/>
</dbReference>
<dbReference type="GO" id="GO:0006048">
    <property type="term" value="P:UDP-N-acetylglucosamine biosynthetic process"/>
    <property type="evidence" value="ECO:0007669"/>
    <property type="project" value="UniProtKB-UniPathway"/>
</dbReference>
<dbReference type="CDD" id="cd02540">
    <property type="entry name" value="GT2_GlmU_N_bac"/>
    <property type="match status" value="1"/>
</dbReference>
<dbReference type="CDD" id="cd03353">
    <property type="entry name" value="LbH_GlmU_C"/>
    <property type="match status" value="1"/>
</dbReference>
<dbReference type="Gene3D" id="2.160.10.10">
    <property type="entry name" value="Hexapeptide repeat proteins"/>
    <property type="match status" value="1"/>
</dbReference>
<dbReference type="Gene3D" id="3.90.550.10">
    <property type="entry name" value="Spore Coat Polysaccharide Biosynthesis Protein SpsA, Chain A"/>
    <property type="match status" value="1"/>
</dbReference>
<dbReference type="HAMAP" id="MF_01631">
    <property type="entry name" value="GlmU"/>
    <property type="match status" value="1"/>
</dbReference>
<dbReference type="InterPro" id="IPR005882">
    <property type="entry name" value="Bifunctional_GlmU"/>
</dbReference>
<dbReference type="InterPro" id="IPR050065">
    <property type="entry name" value="GlmU-like"/>
</dbReference>
<dbReference type="InterPro" id="IPR038009">
    <property type="entry name" value="GlmU_C_LbH"/>
</dbReference>
<dbReference type="InterPro" id="IPR001451">
    <property type="entry name" value="Hexapep"/>
</dbReference>
<dbReference type="InterPro" id="IPR025877">
    <property type="entry name" value="MobA-like_NTP_Trfase"/>
</dbReference>
<dbReference type="InterPro" id="IPR029044">
    <property type="entry name" value="Nucleotide-diphossugar_trans"/>
</dbReference>
<dbReference type="InterPro" id="IPR011004">
    <property type="entry name" value="Trimer_LpxA-like_sf"/>
</dbReference>
<dbReference type="NCBIfam" id="TIGR01173">
    <property type="entry name" value="glmU"/>
    <property type="match status" value="1"/>
</dbReference>
<dbReference type="PANTHER" id="PTHR43584:SF3">
    <property type="entry name" value="BIFUNCTIONAL PROTEIN GLMU"/>
    <property type="match status" value="1"/>
</dbReference>
<dbReference type="PANTHER" id="PTHR43584">
    <property type="entry name" value="NUCLEOTIDYL TRANSFERASE"/>
    <property type="match status" value="1"/>
</dbReference>
<dbReference type="Pfam" id="PF00132">
    <property type="entry name" value="Hexapep"/>
    <property type="match status" value="2"/>
</dbReference>
<dbReference type="Pfam" id="PF12804">
    <property type="entry name" value="NTP_transf_3"/>
    <property type="match status" value="1"/>
</dbReference>
<dbReference type="SUPFAM" id="SSF53448">
    <property type="entry name" value="Nucleotide-diphospho-sugar transferases"/>
    <property type="match status" value="1"/>
</dbReference>
<dbReference type="SUPFAM" id="SSF51161">
    <property type="entry name" value="Trimeric LpxA-like enzymes"/>
    <property type="match status" value="1"/>
</dbReference>
<protein>
    <recommendedName>
        <fullName evidence="1">Bifunctional protein GlmU</fullName>
    </recommendedName>
    <domain>
        <recommendedName>
            <fullName evidence="1">UDP-N-acetylglucosamine pyrophosphorylase</fullName>
            <ecNumber evidence="1">2.7.7.23</ecNumber>
        </recommendedName>
        <alternativeName>
            <fullName evidence="1">N-acetylglucosamine-1-phosphate uridyltransferase</fullName>
        </alternativeName>
    </domain>
    <domain>
        <recommendedName>
            <fullName evidence="1">Glucosamine-1-phosphate N-acetyltransferase</fullName>
            <ecNumber evidence="1">2.3.1.157</ecNumber>
        </recommendedName>
    </domain>
</protein>
<accession>Q3JWX1</accession>
<comment type="function">
    <text evidence="1">Catalyzes the last two sequential reactions in the de novo biosynthetic pathway for UDP-N-acetylglucosamine (UDP-GlcNAc). The C-terminal domain catalyzes the transfer of acetyl group from acetyl coenzyme A to glucosamine-1-phosphate (GlcN-1-P) to produce N-acetylglucosamine-1-phosphate (GlcNAc-1-P), which is converted into UDP-GlcNAc by the transfer of uridine 5-monophosphate (from uridine 5-triphosphate), a reaction catalyzed by the N-terminal domain.</text>
</comment>
<comment type="catalytic activity">
    <reaction evidence="1">
        <text>alpha-D-glucosamine 1-phosphate + acetyl-CoA = N-acetyl-alpha-D-glucosamine 1-phosphate + CoA + H(+)</text>
        <dbReference type="Rhea" id="RHEA:13725"/>
        <dbReference type="ChEBI" id="CHEBI:15378"/>
        <dbReference type="ChEBI" id="CHEBI:57287"/>
        <dbReference type="ChEBI" id="CHEBI:57288"/>
        <dbReference type="ChEBI" id="CHEBI:57776"/>
        <dbReference type="ChEBI" id="CHEBI:58516"/>
        <dbReference type="EC" id="2.3.1.157"/>
    </reaction>
</comment>
<comment type="catalytic activity">
    <reaction evidence="1">
        <text>N-acetyl-alpha-D-glucosamine 1-phosphate + UTP + H(+) = UDP-N-acetyl-alpha-D-glucosamine + diphosphate</text>
        <dbReference type="Rhea" id="RHEA:13509"/>
        <dbReference type="ChEBI" id="CHEBI:15378"/>
        <dbReference type="ChEBI" id="CHEBI:33019"/>
        <dbReference type="ChEBI" id="CHEBI:46398"/>
        <dbReference type="ChEBI" id="CHEBI:57705"/>
        <dbReference type="ChEBI" id="CHEBI:57776"/>
        <dbReference type="EC" id="2.7.7.23"/>
    </reaction>
</comment>
<comment type="cofactor">
    <cofactor evidence="1">
        <name>Mg(2+)</name>
        <dbReference type="ChEBI" id="CHEBI:18420"/>
    </cofactor>
    <text evidence="1">Binds 1 Mg(2+) ion per subunit.</text>
</comment>
<comment type="pathway">
    <text evidence="1">Nucleotide-sugar biosynthesis; UDP-N-acetyl-alpha-D-glucosamine biosynthesis; N-acetyl-alpha-D-glucosamine 1-phosphate from alpha-D-glucosamine 6-phosphate (route II): step 2/2.</text>
</comment>
<comment type="pathway">
    <text evidence="1">Nucleotide-sugar biosynthesis; UDP-N-acetyl-alpha-D-glucosamine biosynthesis; UDP-N-acetyl-alpha-D-glucosamine from N-acetyl-alpha-D-glucosamine 1-phosphate: step 1/1.</text>
</comment>
<comment type="pathway">
    <text evidence="1">Bacterial outer membrane biogenesis; LPS lipid A biosynthesis.</text>
</comment>
<comment type="subunit">
    <text evidence="1">Homotrimer.</text>
</comment>
<comment type="subcellular location">
    <subcellularLocation>
        <location evidence="1">Cytoplasm</location>
    </subcellularLocation>
</comment>
<comment type="similarity">
    <text evidence="1">In the N-terminal section; belongs to the N-acetylglucosamine-1-phosphate uridyltransferase family.</text>
</comment>
<comment type="similarity">
    <text evidence="1">In the C-terminal section; belongs to the transferase hexapeptide repeat family.</text>
</comment>
<comment type="sequence caution" evidence="2">
    <conflict type="erroneous initiation">
        <sequence resource="EMBL-CDS" id="ABA49097"/>
    </conflict>
</comment>
<feature type="chain" id="PRO_0000233749" description="Bifunctional protein GlmU">
    <location>
        <begin position="1"/>
        <end position="453"/>
    </location>
</feature>
<feature type="region of interest" description="Pyrophosphorylase" evidence="1">
    <location>
        <begin position="1"/>
        <end position="225"/>
    </location>
</feature>
<feature type="region of interest" description="Linker" evidence="1">
    <location>
        <begin position="226"/>
        <end position="246"/>
    </location>
</feature>
<feature type="region of interest" description="N-acetyltransferase" evidence="1">
    <location>
        <begin position="247"/>
        <end position="453"/>
    </location>
</feature>
<feature type="active site" description="Proton acceptor" evidence="1">
    <location>
        <position position="359"/>
    </location>
</feature>
<feature type="binding site" evidence="1">
    <location>
        <begin position="6"/>
        <end position="9"/>
    </location>
    <ligand>
        <name>UDP-N-acetyl-alpha-D-glucosamine</name>
        <dbReference type="ChEBI" id="CHEBI:57705"/>
    </ligand>
</feature>
<feature type="binding site" evidence="1">
    <location>
        <position position="20"/>
    </location>
    <ligand>
        <name>UDP-N-acetyl-alpha-D-glucosamine</name>
        <dbReference type="ChEBI" id="CHEBI:57705"/>
    </ligand>
</feature>
<feature type="binding site" evidence="1">
    <location>
        <position position="71"/>
    </location>
    <ligand>
        <name>UDP-N-acetyl-alpha-D-glucosamine</name>
        <dbReference type="ChEBI" id="CHEBI:57705"/>
    </ligand>
</feature>
<feature type="binding site" evidence="1">
    <location>
        <begin position="76"/>
        <end position="77"/>
    </location>
    <ligand>
        <name>UDP-N-acetyl-alpha-D-glucosamine</name>
        <dbReference type="ChEBI" id="CHEBI:57705"/>
    </ligand>
</feature>
<feature type="binding site" evidence="1">
    <location>
        <begin position="98"/>
        <end position="100"/>
    </location>
    <ligand>
        <name>UDP-N-acetyl-alpha-D-glucosamine</name>
        <dbReference type="ChEBI" id="CHEBI:57705"/>
    </ligand>
</feature>
<feature type="binding site" evidence="1">
    <location>
        <position position="100"/>
    </location>
    <ligand>
        <name>Mg(2+)</name>
        <dbReference type="ChEBI" id="CHEBI:18420"/>
    </ligand>
</feature>
<feature type="binding site" evidence="1">
    <location>
        <position position="135"/>
    </location>
    <ligand>
        <name>UDP-N-acetyl-alpha-D-glucosamine</name>
        <dbReference type="ChEBI" id="CHEBI:57705"/>
    </ligand>
</feature>
<feature type="binding site" evidence="1">
    <location>
        <position position="150"/>
    </location>
    <ligand>
        <name>UDP-N-acetyl-alpha-D-glucosamine</name>
        <dbReference type="ChEBI" id="CHEBI:57705"/>
    </ligand>
</feature>
<feature type="binding site" evidence="1">
    <location>
        <position position="165"/>
    </location>
    <ligand>
        <name>UDP-N-acetyl-alpha-D-glucosamine</name>
        <dbReference type="ChEBI" id="CHEBI:57705"/>
    </ligand>
</feature>
<feature type="binding site" evidence="1">
    <location>
        <position position="223"/>
    </location>
    <ligand>
        <name>Mg(2+)</name>
        <dbReference type="ChEBI" id="CHEBI:18420"/>
    </ligand>
</feature>
<feature type="binding site" evidence="1">
    <location>
        <position position="223"/>
    </location>
    <ligand>
        <name>UDP-N-acetyl-alpha-D-glucosamine</name>
        <dbReference type="ChEBI" id="CHEBI:57705"/>
    </ligand>
</feature>
<feature type="binding site" evidence="1">
    <location>
        <position position="329"/>
    </location>
    <ligand>
        <name>UDP-N-acetyl-alpha-D-glucosamine</name>
        <dbReference type="ChEBI" id="CHEBI:57705"/>
    </ligand>
</feature>
<feature type="binding site" evidence="1">
    <location>
        <position position="347"/>
    </location>
    <ligand>
        <name>UDP-N-acetyl-alpha-D-glucosamine</name>
        <dbReference type="ChEBI" id="CHEBI:57705"/>
    </ligand>
</feature>
<feature type="binding site" evidence="1">
    <location>
        <position position="362"/>
    </location>
    <ligand>
        <name>UDP-N-acetyl-alpha-D-glucosamine</name>
        <dbReference type="ChEBI" id="CHEBI:57705"/>
    </ligand>
</feature>
<feature type="binding site" evidence="1">
    <location>
        <position position="373"/>
    </location>
    <ligand>
        <name>UDP-N-acetyl-alpha-D-glucosamine</name>
        <dbReference type="ChEBI" id="CHEBI:57705"/>
    </ligand>
</feature>
<feature type="binding site" evidence="1">
    <location>
        <position position="376"/>
    </location>
    <ligand>
        <name>acetyl-CoA</name>
        <dbReference type="ChEBI" id="CHEBI:57288"/>
    </ligand>
</feature>
<feature type="binding site" evidence="1">
    <location>
        <begin position="382"/>
        <end position="383"/>
    </location>
    <ligand>
        <name>acetyl-CoA</name>
        <dbReference type="ChEBI" id="CHEBI:57288"/>
    </ligand>
</feature>
<feature type="binding site" evidence="1">
    <location>
        <position position="401"/>
    </location>
    <ligand>
        <name>acetyl-CoA</name>
        <dbReference type="ChEBI" id="CHEBI:57288"/>
    </ligand>
</feature>
<feature type="binding site" evidence="1">
    <location>
        <position position="419"/>
    </location>
    <ligand>
        <name>acetyl-CoA</name>
        <dbReference type="ChEBI" id="CHEBI:57288"/>
    </ligand>
</feature>
<organism>
    <name type="scientific">Burkholderia pseudomallei (strain 1710b)</name>
    <dbReference type="NCBI Taxonomy" id="320372"/>
    <lineage>
        <taxon>Bacteria</taxon>
        <taxon>Pseudomonadati</taxon>
        <taxon>Pseudomonadota</taxon>
        <taxon>Betaproteobacteria</taxon>
        <taxon>Burkholderiales</taxon>
        <taxon>Burkholderiaceae</taxon>
        <taxon>Burkholderia</taxon>
        <taxon>pseudomallei group</taxon>
    </lineage>
</organism>
<sequence length="453" mass="47580">MNIVILAAGTGKRMRSALPKVLHPLAGRPLLSHVIDTARALAPSRLVVVIGHGAEQVRAAVAAPDVQFAVQEQQLGTGHAVRQALPLLDPSQPTLVLYGDVPLTRTATLKRLADAATDARYGVLTVTLDDPTGYGRIVRDQAGCVTRIVEQKDASPDELRIDEINTGIVVAPTAQLSMWLGALGNDNAQGEYYLTDVVEQAIEAGFEIVTTQPDDEWETLGVNSKAQLAELERIHQRNLADALLAAGVTLADPARIDVRGTLACGRDVSIDVNCVFEGDVTLADGVTIGANCVIRHAAIAAGARVDAFSHLDGATVGANAVVGPYARLRPGAVLAADAHVGNFVEVKNATLGQGSKANHLTYLGDADIGARVNVGAGTITCNYDGANKFRTVIEDDVFVGSDTQFVAPVRVGRGVTVAAGTTVWKDVAADMLVLNDKTQTAKSGYVRPVKKKS</sequence>
<proteinExistence type="inferred from homology"/>
<gene>
    <name evidence="1" type="primary">glmU</name>
    <name type="ordered locus">BURPS1710b_0518</name>
</gene>
<name>GLMU_BURP1</name>
<evidence type="ECO:0000255" key="1">
    <source>
        <dbReference type="HAMAP-Rule" id="MF_01631"/>
    </source>
</evidence>
<evidence type="ECO:0000305" key="2"/>
<reference key="1">
    <citation type="journal article" date="2010" name="Genome Biol. Evol.">
        <title>Continuing evolution of Burkholderia mallei through genome reduction and large-scale rearrangements.</title>
        <authorList>
            <person name="Losada L."/>
            <person name="Ronning C.M."/>
            <person name="DeShazer D."/>
            <person name="Woods D."/>
            <person name="Fedorova N."/>
            <person name="Kim H.S."/>
            <person name="Shabalina S.A."/>
            <person name="Pearson T.R."/>
            <person name="Brinkac L."/>
            <person name="Tan P."/>
            <person name="Nandi T."/>
            <person name="Crabtree J."/>
            <person name="Badger J."/>
            <person name="Beckstrom-Sternberg S."/>
            <person name="Saqib M."/>
            <person name="Schutzer S.E."/>
            <person name="Keim P."/>
            <person name="Nierman W.C."/>
        </authorList>
    </citation>
    <scope>NUCLEOTIDE SEQUENCE [LARGE SCALE GENOMIC DNA]</scope>
    <source>
        <strain>1710b</strain>
    </source>
</reference>
<keyword id="KW-0012">Acyltransferase</keyword>
<keyword id="KW-0133">Cell shape</keyword>
<keyword id="KW-0961">Cell wall biogenesis/degradation</keyword>
<keyword id="KW-0963">Cytoplasm</keyword>
<keyword id="KW-0460">Magnesium</keyword>
<keyword id="KW-0479">Metal-binding</keyword>
<keyword id="KW-0511">Multifunctional enzyme</keyword>
<keyword id="KW-0548">Nucleotidyltransferase</keyword>
<keyword id="KW-0573">Peptidoglycan synthesis</keyword>
<keyword id="KW-0677">Repeat</keyword>
<keyword id="KW-0808">Transferase</keyword>